<organism>
    <name type="scientific">Schizosaccharomyces pombe (strain 972 / ATCC 24843)</name>
    <name type="common">Fission yeast</name>
    <dbReference type="NCBI Taxonomy" id="284812"/>
    <lineage>
        <taxon>Eukaryota</taxon>
        <taxon>Fungi</taxon>
        <taxon>Dikarya</taxon>
        <taxon>Ascomycota</taxon>
        <taxon>Taphrinomycotina</taxon>
        <taxon>Schizosaccharomycetes</taxon>
        <taxon>Schizosaccharomycetales</taxon>
        <taxon>Schizosaccharomycetaceae</taxon>
        <taxon>Schizosaccharomyces</taxon>
    </lineage>
</organism>
<gene>
    <name type="primary">atx1</name>
    <name type="ORF">SPBC1709.10c</name>
</gene>
<name>ATX1_SCHPO</name>
<accession>O74735</accession>
<feature type="chain" id="PRO_0000314752" description="Metal homeostasis factor atx1">
    <location>
        <begin position="1"/>
        <end position="68"/>
    </location>
</feature>
<feature type="domain" description="HMA" evidence="2">
    <location>
        <begin position="1"/>
        <end position="62"/>
    </location>
</feature>
<feature type="binding site" evidence="2">
    <location>
        <position position="11"/>
    </location>
    <ligand>
        <name>Cu cation</name>
        <dbReference type="ChEBI" id="CHEBI:23378"/>
    </ligand>
</feature>
<feature type="binding site" evidence="2">
    <location>
        <position position="14"/>
    </location>
    <ligand>
        <name>Cu cation</name>
        <dbReference type="ChEBI" id="CHEBI:23378"/>
    </ligand>
</feature>
<reference key="1">
    <citation type="journal article" date="2002" name="Nature">
        <title>The genome sequence of Schizosaccharomyces pombe.</title>
        <authorList>
            <person name="Wood V."/>
            <person name="Gwilliam R."/>
            <person name="Rajandream M.A."/>
            <person name="Lyne M.H."/>
            <person name="Lyne R."/>
            <person name="Stewart A."/>
            <person name="Sgouros J.G."/>
            <person name="Peat N."/>
            <person name="Hayles J."/>
            <person name="Baker S.G."/>
            <person name="Basham D."/>
            <person name="Bowman S."/>
            <person name="Brooks K."/>
            <person name="Brown D."/>
            <person name="Brown S."/>
            <person name="Chillingworth T."/>
            <person name="Churcher C.M."/>
            <person name="Collins M."/>
            <person name="Connor R."/>
            <person name="Cronin A."/>
            <person name="Davis P."/>
            <person name="Feltwell T."/>
            <person name="Fraser A."/>
            <person name="Gentles S."/>
            <person name="Goble A."/>
            <person name="Hamlin N."/>
            <person name="Harris D.E."/>
            <person name="Hidalgo J."/>
            <person name="Hodgson G."/>
            <person name="Holroyd S."/>
            <person name="Hornsby T."/>
            <person name="Howarth S."/>
            <person name="Huckle E.J."/>
            <person name="Hunt S."/>
            <person name="Jagels K."/>
            <person name="James K.D."/>
            <person name="Jones L."/>
            <person name="Jones M."/>
            <person name="Leather S."/>
            <person name="McDonald S."/>
            <person name="McLean J."/>
            <person name="Mooney P."/>
            <person name="Moule S."/>
            <person name="Mungall K.L."/>
            <person name="Murphy L.D."/>
            <person name="Niblett D."/>
            <person name="Odell C."/>
            <person name="Oliver K."/>
            <person name="O'Neil S."/>
            <person name="Pearson D."/>
            <person name="Quail M.A."/>
            <person name="Rabbinowitsch E."/>
            <person name="Rutherford K.M."/>
            <person name="Rutter S."/>
            <person name="Saunders D."/>
            <person name="Seeger K."/>
            <person name="Sharp S."/>
            <person name="Skelton J."/>
            <person name="Simmonds M.N."/>
            <person name="Squares R."/>
            <person name="Squares S."/>
            <person name="Stevens K."/>
            <person name="Taylor K."/>
            <person name="Taylor R.G."/>
            <person name="Tivey A."/>
            <person name="Walsh S.V."/>
            <person name="Warren T."/>
            <person name="Whitehead S."/>
            <person name="Woodward J.R."/>
            <person name="Volckaert G."/>
            <person name="Aert R."/>
            <person name="Robben J."/>
            <person name="Grymonprez B."/>
            <person name="Weltjens I."/>
            <person name="Vanstreels E."/>
            <person name="Rieger M."/>
            <person name="Schaefer M."/>
            <person name="Mueller-Auer S."/>
            <person name="Gabel C."/>
            <person name="Fuchs M."/>
            <person name="Duesterhoeft A."/>
            <person name="Fritzc C."/>
            <person name="Holzer E."/>
            <person name="Moestl D."/>
            <person name="Hilbert H."/>
            <person name="Borzym K."/>
            <person name="Langer I."/>
            <person name="Beck A."/>
            <person name="Lehrach H."/>
            <person name="Reinhardt R."/>
            <person name="Pohl T.M."/>
            <person name="Eger P."/>
            <person name="Zimmermann W."/>
            <person name="Wedler H."/>
            <person name="Wambutt R."/>
            <person name="Purnelle B."/>
            <person name="Goffeau A."/>
            <person name="Cadieu E."/>
            <person name="Dreano S."/>
            <person name="Gloux S."/>
            <person name="Lelaure V."/>
            <person name="Mottier S."/>
            <person name="Galibert F."/>
            <person name="Aves S.J."/>
            <person name="Xiang Z."/>
            <person name="Hunt C."/>
            <person name="Moore K."/>
            <person name="Hurst S.M."/>
            <person name="Lucas M."/>
            <person name="Rochet M."/>
            <person name="Gaillardin C."/>
            <person name="Tallada V.A."/>
            <person name="Garzon A."/>
            <person name="Thode G."/>
            <person name="Daga R.R."/>
            <person name="Cruzado L."/>
            <person name="Jimenez J."/>
            <person name="Sanchez M."/>
            <person name="del Rey F."/>
            <person name="Benito J."/>
            <person name="Dominguez A."/>
            <person name="Revuelta J.L."/>
            <person name="Moreno S."/>
            <person name="Armstrong J."/>
            <person name="Forsburg S.L."/>
            <person name="Cerutti L."/>
            <person name="Lowe T."/>
            <person name="McCombie W.R."/>
            <person name="Paulsen I."/>
            <person name="Potashkin J."/>
            <person name="Shpakovski G.V."/>
            <person name="Ussery D."/>
            <person name="Barrell B.G."/>
            <person name="Nurse P."/>
        </authorList>
    </citation>
    <scope>NUCLEOTIDE SEQUENCE [LARGE SCALE GENOMIC DNA]</scope>
    <source>
        <strain>972 / ATCC 24843</strain>
    </source>
</reference>
<reference key="2">
    <citation type="journal article" date="2006" name="Nat. Biotechnol.">
        <title>ORFeome cloning and global analysis of protein localization in the fission yeast Schizosaccharomyces pombe.</title>
        <authorList>
            <person name="Matsuyama A."/>
            <person name="Arai R."/>
            <person name="Yashiroda Y."/>
            <person name="Shirai A."/>
            <person name="Kamata A."/>
            <person name="Sekido S."/>
            <person name="Kobayashi Y."/>
            <person name="Hashimoto A."/>
            <person name="Hamamoto M."/>
            <person name="Hiraoka Y."/>
            <person name="Horinouchi S."/>
            <person name="Yoshida M."/>
        </authorList>
    </citation>
    <scope>SUBCELLULAR LOCATION [LARGE SCALE ANALYSIS]</scope>
</reference>
<proteinExistence type="inferred from homology"/>
<evidence type="ECO:0000250" key="1"/>
<evidence type="ECO:0000255" key="2">
    <source>
        <dbReference type="PROSITE-ProRule" id="PRU00280"/>
    </source>
</evidence>
<evidence type="ECO:0000269" key="3">
    <source>
    </source>
</evidence>
<evidence type="ECO:0000305" key="4"/>
<dbReference type="EMBL" id="CU329671">
    <property type="protein sequence ID" value="CAA21249.1"/>
    <property type="molecule type" value="Genomic_DNA"/>
</dbReference>
<dbReference type="PIR" id="T39638">
    <property type="entry name" value="T39638"/>
</dbReference>
<dbReference type="RefSeq" id="NP_595443.1">
    <property type="nucleotide sequence ID" value="NM_001021352.2"/>
</dbReference>
<dbReference type="SMR" id="O74735"/>
<dbReference type="BioGRID" id="276556">
    <property type="interactions" value="1"/>
</dbReference>
<dbReference type="FunCoup" id="O74735">
    <property type="interactions" value="473"/>
</dbReference>
<dbReference type="STRING" id="284812.O74735"/>
<dbReference type="iPTMnet" id="O74735"/>
<dbReference type="PaxDb" id="4896-SPBC1709.10c.1"/>
<dbReference type="EnsemblFungi" id="SPBC1709.10c.1">
    <property type="protein sequence ID" value="SPBC1709.10c.1:pep"/>
    <property type="gene ID" value="SPBC1709.10c"/>
</dbReference>
<dbReference type="GeneID" id="2540012"/>
<dbReference type="KEGG" id="spo:2540012"/>
<dbReference type="PomBase" id="SPBC1709.10c">
    <property type="gene designation" value="atx1"/>
</dbReference>
<dbReference type="VEuPathDB" id="FungiDB:SPBC1709.10c"/>
<dbReference type="eggNOG" id="KOG1603">
    <property type="taxonomic scope" value="Eukaryota"/>
</dbReference>
<dbReference type="HOGENOM" id="CLU_134973_3_1_1"/>
<dbReference type="InParanoid" id="O74735"/>
<dbReference type="OMA" id="MTHTYKF"/>
<dbReference type="PhylomeDB" id="O74735"/>
<dbReference type="PRO" id="PR:O74735"/>
<dbReference type="Proteomes" id="UP000002485">
    <property type="component" value="Chromosome II"/>
</dbReference>
<dbReference type="GO" id="GO:0005829">
    <property type="term" value="C:cytosol"/>
    <property type="evidence" value="ECO:0007005"/>
    <property type="project" value="PomBase"/>
</dbReference>
<dbReference type="GO" id="GO:0005634">
    <property type="term" value="C:nucleus"/>
    <property type="evidence" value="ECO:0007005"/>
    <property type="project" value="PomBase"/>
</dbReference>
<dbReference type="GO" id="GO:0016531">
    <property type="term" value="F:copper chaperone activity"/>
    <property type="evidence" value="ECO:0000314"/>
    <property type="project" value="PomBase"/>
</dbReference>
<dbReference type="GO" id="GO:0046872">
    <property type="term" value="F:metal ion binding"/>
    <property type="evidence" value="ECO:0007669"/>
    <property type="project" value="UniProtKB-KW"/>
</dbReference>
<dbReference type="GO" id="GO:0006825">
    <property type="term" value="P:copper ion transport"/>
    <property type="evidence" value="ECO:0000318"/>
    <property type="project" value="GO_Central"/>
</dbReference>
<dbReference type="GO" id="GO:0051604">
    <property type="term" value="P:protein maturation"/>
    <property type="evidence" value="ECO:0000269"/>
    <property type="project" value="PomBase"/>
</dbReference>
<dbReference type="CDD" id="cd00371">
    <property type="entry name" value="HMA"/>
    <property type="match status" value="1"/>
</dbReference>
<dbReference type="FunFam" id="3.30.70.100:FF:000008">
    <property type="entry name" value="Copper transport protein ATOX1"/>
    <property type="match status" value="1"/>
</dbReference>
<dbReference type="Gene3D" id="3.30.70.100">
    <property type="match status" value="1"/>
</dbReference>
<dbReference type="InterPro" id="IPR051881">
    <property type="entry name" value="Copper_transport_ATOX1-like"/>
</dbReference>
<dbReference type="InterPro" id="IPR017969">
    <property type="entry name" value="Heavy-metal-associated_CS"/>
</dbReference>
<dbReference type="InterPro" id="IPR006121">
    <property type="entry name" value="HMA_dom"/>
</dbReference>
<dbReference type="InterPro" id="IPR036163">
    <property type="entry name" value="HMA_dom_sf"/>
</dbReference>
<dbReference type="PANTHER" id="PTHR46365">
    <property type="entry name" value="COPPER TRANSPORT PROTEIN ATOX1"/>
    <property type="match status" value="1"/>
</dbReference>
<dbReference type="PANTHER" id="PTHR46365:SF1">
    <property type="entry name" value="COPPER TRANSPORT PROTEIN ATOX1"/>
    <property type="match status" value="1"/>
</dbReference>
<dbReference type="Pfam" id="PF00403">
    <property type="entry name" value="HMA"/>
    <property type="match status" value="1"/>
</dbReference>
<dbReference type="SUPFAM" id="SSF55008">
    <property type="entry name" value="HMA, heavy metal-associated domain"/>
    <property type="match status" value="1"/>
</dbReference>
<dbReference type="PROSITE" id="PS01047">
    <property type="entry name" value="HMA_1"/>
    <property type="match status" value="1"/>
</dbReference>
<dbReference type="PROSITE" id="PS50846">
    <property type="entry name" value="HMA_2"/>
    <property type="match status" value="1"/>
</dbReference>
<protein>
    <recommendedName>
        <fullName>Metal homeostasis factor atx1</fullName>
    </recommendedName>
</protein>
<comment type="function">
    <text evidence="1">Shuttles copper to the transport ATPase ccc2. Protects against oxygen toxicity (By similarity).</text>
</comment>
<comment type="subcellular location">
    <subcellularLocation>
        <location evidence="3">Cytoplasm</location>
    </subcellularLocation>
    <subcellularLocation>
        <location evidence="3">Nucleus</location>
    </subcellularLocation>
</comment>
<comment type="similarity">
    <text evidence="4">Belongs to the ATX1 family.</text>
</comment>
<sequence>MKYQFNVAMACDGCKNAIDRVLTRLGVEDKSISVEKQEVIVTTDKPYELVEQTIKKTGKEVRSGKVLE</sequence>
<keyword id="KW-0143">Chaperone</keyword>
<keyword id="KW-0186">Copper</keyword>
<keyword id="KW-0187">Copper transport</keyword>
<keyword id="KW-0963">Cytoplasm</keyword>
<keyword id="KW-0406">Ion transport</keyword>
<keyword id="KW-0479">Metal-binding</keyword>
<keyword id="KW-0539">Nucleus</keyword>
<keyword id="KW-1185">Reference proteome</keyword>
<keyword id="KW-0813">Transport</keyword>